<name>LTND_ECOL6</name>
<sequence length="302" mass="30706">MKTGSEFHVGIVGLGSMGMGAALSCVRAGLSTWGADLNSNACATLKEAGACGVSDNAATFAEKLDALLVLVVNATQVKQVLFGEKGVAQHLKPGTAVMVSSTIASADAQEIATALAGFGLEMLDAPVSGGAVKAANGEMTVMASGSDIAFERLAPVLEAVAGKVYRIGSEPGLGSTVKIIHQLLAGVHIAAGAEAMALAARAGIPLDVMYDVVTNAAGNSWMFENRMRHVVDGDYTPHSAVDIFVKDLGLVADTAKALHFPLPLASTALNMFTSASNAGYGKEDDSAVIKIFSGITLPGAKS</sequence>
<proteinExistence type="evidence at protein level"/>
<organism>
    <name type="scientific">Escherichia coli O6:H1 (strain CFT073 / ATCC 700928 / UPEC)</name>
    <dbReference type="NCBI Taxonomy" id="199310"/>
    <lineage>
        <taxon>Bacteria</taxon>
        <taxon>Pseudomonadati</taxon>
        <taxon>Pseudomonadota</taxon>
        <taxon>Gammaproteobacteria</taxon>
        <taxon>Enterobacterales</taxon>
        <taxon>Enterobacteriaceae</taxon>
        <taxon>Escherichia</taxon>
    </lineage>
</organism>
<gene>
    <name evidence="4" type="primary">ltnD</name>
    <name evidence="6" type="synonym">ygbJ</name>
    <name evidence="6" type="ordered locus">c3297</name>
</gene>
<keyword id="KW-0119">Carbohydrate metabolism</keyword>
<keyword id="KW-0520">NAD</keyword>
<keyword id="KW-0521">NADP</keyword>
<keyword id="KW-0560">Oxidoreductase</keyword>
<keyword id="KW-1185">Reference proteome</keyword>
<protein>
    <recommendedName>
        <fullName evidence="4">L-threonate dehydrogenase</fullName>
        <ecNumber evidence="3">1.1.1.411</ecNumber>
    </recommendedName>
</protein>
<reference key="1">
    <citation type="journal article" date="2002" name="Proc. Natl. Acad. Sci. U.S.A.">
        <title>Extensive mosaic structure revealed by the complete genome sequence of uropathogenic Escherichia coli.</title>
        <authorList>
            <person name="Welch R.A."/>
            <person name="Burland V."/>
            <person name="Plunkett G. III"/>
            <person name="Redford P."/>
            <person name="Roesch P."/>
            <person name="Rasko D."/>
            <person name="Buckles E.L."/>
            <person name="Liou S.-R."/>
            <person name="Boutin A."/>
            <person name="Hackett J."/>
            <person name="Stroud D."/>
            <person name="Mayhew G.F."/>
            <person name="Rose D.J."/>
            <person name="Zhou S."/>
            <person name="Schwartz D.C."/>
            <person name="Perna N.T."/>
            <person name="Mobley H.L.T."/>
            <person name="Donnenberg M.S."/>
            <person name="Blattner F.R."/>
        </authorList>
    </citation>
    <scope>NUCLEOTIDE SEQUENCE [LARGE SCALE GENOMIC DNA]</scope>
    <source>
        <strain>CFT073 / ATCC 700928 / UPEC</strain>
    </source>
</reference>
<reference key="2">
    <citation type="journal article" date="2016" name="Proc. Natl. Acad. Sci. U.S.A.">
        <title>Assignment of function to a domain of unknown function: DUF1537 is a new kinase family in catabolic pathways for acid sugars.</title>
        <authorList>
            <person name="Zhang X."/>
            <person name="Carter M.S."/>
            <person name="Vetting M.W."/>
            <person name="San Francisco B."/>
            <person name="Zhao S."/>
            <person name="Al-Obaidi N.F."/>
            <person name="Solbiati J.O."/>
            <person name="Thiaville J.J."/>
            <person name="de Crecy-Lagard V."/>
            <person name="Jacobson M.P."/>
            <person name="Almo S.C."/>
            <person name="Gerlt J.A."/>
        </authorList>
    </citation>
    <scope>FUNCTION</scope>
    <scope>CATALYTIC ACTIVITY</scope>
    <scope>BIOPHYSICOCHEMICAL PROPERTIES</scope>
    <source>
        <strain>CFT073 / ATCC 700928 / UPEC</strain>
    </source>
</reference>
<comment type="function">
    <text evidence="3">Catalyzes oxidation of L-threonate to 2-oxo-tetronate. Can use either NAD(+) or NADP(+) as cosubstrate, with a preference for NAD(+).</text>
</comment>
<comment type="catalytic activity">
    <reaction evidence="3">
        <text>L-threonate + NAD(+) = 2-dehydro-L-erythronate + NADH + H(+)</text>
        <dbReference type="Rhea" id="RHEA:52548"/>
        <dbReference type="ChEBI" id="CHEBI:15378"/>
        <dbReference type="ChEBI" id="CHEBI:57540"/>
        <dbReference type="ChEBI" id="CHEBI:57561"/>
        <dbReference type="ChEBI" id="CHEBI:57945"/>
        <dbReference type="ChEBI" id="CHEBI:136669"/>
        <dbReference type="EC" id="1.1.1.411"/>
    </reaction>
</comment>
<comment type="biophysicochemical properties">
    <kinetics>
        <KM evidence="3">0.16 mM for NAD(+)</KM>
        <KM evidence="3">0.59 mM for NADP(+)</KM>
        <text evidence="3">kcat is 28 sec(-1) with NAD(+) as cosubstrate. kcat is 3.5 sec(-1) with NADP(+) as cosubstrate.</text>
    </kinetics>
</comment>
<comment type="similarity">
    <text evidence="5">Belongs to the HIBADH-related family. L-threonate dehydrogenase subfamily.</text>
</comment>
<accession>A0A0H2VA68</accession>
<dbReference type="EC" id="1.1.1.411" evidence="3"/>
<dbReference type="EMBL" id="AE014075">
    <property type="protein sequence ID" value="AAN81746.1"/>
    <property type="molecule type" value="Genomic_DNA"/>
</dbReference>
<dbReference type="RefSeq" id="WP_000847998.1">
    <property type="nucleotide sequence ID" value="NZ_CP051263.1"/>
</dbReference>
<dbReference type="SMR" id="A0A0H2VA68"/>
<dbReference type="STRING" id="199310.c3297"/>
<dbReference type="KEGG" id="ecc:c3297"/>
<dbReference type="eggNOG" id="COG2084">
    <property type="taxonomic scope" value="Bacteria"/>
</dbReference>
<dbReference type="HOGENOM" id="CLU_035117_1_2_6"/>
<dbReference type="Proteomes" id="UP000001410">
    <property type="component" value="Chromosome"/>
</dbReference>
<dbReference type="GO" id="GO:0051287">
    <property type="term" value="F:NAD binding"/>
    <property type="evidence" value="ECO:0007669"/>
    <property type="project" value="InterPro"/>
</dbReference>
<dbReference type="GO" id="GO:0050661">
    <property type="term" value="F:NADP binding"/>
    <property type="evidence" value="ECO:0007669"/>
    <property type="project" value="InterPro"/>
</dbReference>
<dbReference type="GO" id="GO:0016616">
    <property type="term" value="F:oxidoreductase activity, acting on the CH-OH group of donors, NAD or NADP as acceptor"/>
    <property type="evidence" value="ECO:0007669"/>
    <property type="project" value="InterPro"/>
</dbReference>
<dbReference type="GO" id="GO:0016054">
    <property type="term" value="P:organic acid catabolic process"/>
    <property type="evidence" value="ECO:0007669"/>
    <property type="project" value="UniProtKB-ARBA"/>
</dbReference>
<dbReference type="Gene3D" id="1.10.1040.10">
    <property type="entry name" value="N-(1-d-carboxylethyl)-l-norvaline Dehydrogenase, domain 2"/>
    <property type="match status" value="1"/>
</dbReference>
<dbReference type="Gene3D" id="3.40.50.720">
    <property type="entry name" value="NAD(P)-binding Rossmann-like Domain"/>
    <property type="match status" value="1"/>
</dbReference>
<dbReference type="InterPro" id="IPR002204">
    <property type="entry name" value="3-OH-isobutyrate_DH-rel_CS"/>
</dbReference>
<dbReference type="InterPro" id="IPR008927">
    <property type="entry name" value="6-PGluconate_DH-like_C_sf"/>
</dbReference>
<dbReference type="InterPro" id="IPR013328">
    <property type="entry name" value="6PGD_dom2"/>
</dbReference>
<dbReference type="InterPro" id="IPR006115">
    <property type="entry name" value="6PGDH_NADP-bd"/>
</dbReference>
<dbReference type="InterPro" id="IPR029154">
    <property type="entry name" value="HIBADH-like_NADP-bd"/>
</dbReference>
<dbReference type="InterPro" id="IPR015815">
    <property type="entry name" value="HIBADH-related"/>
</dbReference>
<dbReference type="InterPro" id="IPR050006">
    <property type="entry name" value="LtnD"/>
</dbReference>
<dbReference type="InterPro" id="IPR036291">
    <property type="entry name" value="NAD(P)-bd_dom_sf"/>
</dbReference>
<dbReference type="NCBIfam" id="NF043037">
    <property type="entry name" value="ThreonDh"/>
    <property type="match status" value="1"/>
</dbReference>
<dbReference type="PANTHER" id="PTHR43060">
    <property type="entry name" value="3-HYDROXYISOBUTYRATE DEHYDROGENASE-LIKE 1, MITOCHONDRIAL-RELATED"/>
    <property type="match status" value="1"/>
</dbReference>
<dbReference type="PANTHER" id="PTHR43060:SF17">
    <property type="entry name" value="L-THREONATE DEHYDROGENASE"/>
    <property type="match status" value="1"/>
</dbReference>
<dbReference type="Pfam" id="PF14833">
    <property type="entry name" value="NAD_binding_11"/>
    <property type="match status" value="1"/>
</dbReference>
<dbReference type="Pfam" id="PF03446">
    <property type="entry name" value="NAD_binding_2"/>
    <property type="match status" value="1"/>
</dbReference>
<dbReference type="PIRSF" id="PIRSF000103">
    <property type="entry name" value="HIBADH"/>
    <property type="match status" value="1"/>
</dbReference>
<dbReference type="SUPFAM" id="SSF48179">
    <property type="entry name" value="6-phosphogluconate dehydrogenase C-terminal domain-like"/>
    <property type="match status" value="1"/>
</dbReference>
<dbReference type="SUPFAM" id="SSF51735">
    <property type="entry name" value="NAD(P)-binding Rossmann-fold domains"/>
    <property type="match status" value="1"/>
</dbReference>
<dbReference type="PROSITE" id="PS00895">
    <property type="entry name" value="3_HYDROXYISOBUT_DH"/>
    <property type="match status" value="1"/>
</dbReference>
<feature type="chain" id="PRO_0000439748" description="L-threonate dehydrogenase">
    <location>
        <begin position="1"/>
        <end position="302"/>
    </location>
</feature>
<feature type="active site" evidence="2">
    <location>
        <position position="178"/>
    </location>
</feature>
<feature type="binding site" evidence="1">
    <location>
        <begin position="7"/>
        <end position="35"/>
    </location>
    <ligand>
        <name>NAD(+)</name>
        <dbReference type="ChEBI" id="CHEBI:57540"/>
    </ligand>
</feature>
<feature type="binding site" evidence="1">
    <location>
        <position position="102"/>
    </location>
    <ligand>
        <name>NAD(+)</name>
        <dbReference type="ChEBI" id="CHEBI:57540"/>
    </ligand>
</feature>
<feature type="binding site" evidence="1">
    <location>
        <position position="246"/>
    </location>
    <ligand>
        <name>NAD(+)</name>
        <dbReference type="ChEBI" id="CHEBI:57540"/>
    </ligand>
</feature>
<evidence type="ECO:0000250" key="1">
    <source>
        <dbReference type="UniProtKB" id="P31937"/>
    </source>
</evidence>
<evidence type="ECO:0000250" key="2">
    <source>
        <dbReference type="UniProtKB" id="Q9I5I6"/>
    </source>
</evidence>
<evidence type="ECO:0000269" key="3">
    <source>
    </source>
</evidence>
<evidence type="ECO:0000303" key="4">
    <source>
    </source>
</evidence>
<evidence type="ECO:0000305" key="5"/>
<evidence type="ECO:0000312" key="6">
    <source>
        <dbReference type="EMBL" id="AAN81746.1"/>
    </source>
</evidence>